<name>ASTE_VIBPA</name>
<dbReference type="EC" id="3.5.1.96" evidence="1"/>
<dbReference type="EMBL" id="BA000031">
    <property type="protein sequence ID" value="BAC59573.1"/>
    <property type="molecule type" value="Genomic_DNA"/>
</dbReference>
<dbReference type="RefSeq" id="NP_797689.1">
    <property type="nucleotide sequence ID" value="NC_004603.1"/>
</dbReference>
<dbReference type="RefSeq" id="WP_005480742.1">
    <property type="nucleotide sequence ID" value="NC_004603.1"/>
</dbReference>
<dbReference type="PDB" id="2BCO">
    <property type="method" value="X-ray"/>
    <property type="resolution" value="2.33 A"/>
    <property type="chains" value="A/B=1-342"/>
</dbReference>
<dbReference type="PDBsum" id="2BCO"/>
<dbReference type="SMR" id="Q87Q40"/>
<dbReference type="GeneID" id="1188815"/>
<dbReference type="KEGG" id="vpa:VP1310"/>
<dbReference type="PATRIC" id="fig|223926.6.peg.1252"/>
<dbReference type="eggNOG" id="COG2988">
    <property type="taxonomic scope" value="Bacteria"/>
</dbReference>
<dbReference type="HOGENOM" id="CLU_071608_0_0_6"/>
<dbReference type="UniPathway" id="UPA00185">
    <property type="reaction ID" value="UER00283"/>
</dbReference>
<dbReference type="EvolutionaryTrace" id="Q87Q40"/>
<dbReference type="Proteomes" id="UP000002493">
    <property type="component" value="Chromosome 1"/>
</dbReference>
<dbReference type="GO" id="GO:0016788">
    <property type="term" value="F:hydrolase activity, acting on ester bonds"/>
    <property type="evidence" value="ECO:0007669"/>
    <property type="project" value="UniProtKB-UniRule"/>
</dbReference>
<dbReference type="GO" id="GO:0009017">
    <property type="term" value="F:succinylglutamate desuccinylase activity"/>
    <property type="evidence" value="ECO:0007669"/>
    <property type="project" value="UniProtKB-EC"/>
</dbReference>
<dbReference type="GO" id="GO:0008270">
    <property type="term" value="F:zinc ion binding"/>
    <property type="evidence" value="ECO:0007669"/>
    <property type="project" value="UniProtKB-UniRule"/>
</dbReference>
<dbReference type="GO" id="GO:0019544">
    <property type="term" value="P:arginine catabolic process to glutamate"/>
    <property type="evidence" value="ECO:0007669"/>
    <property type="project" value="UniProtKB-UniRule"/>
</dbReference>
<dbReference type="GO" id="GO:0019545">
    <property type="term" value="P:arginine catabolic process to succinate"/>
    <property type="evidence" value="ECO:0007669"/>
    <property type="project" value="UniProtKB-UniRule"/>
</dbReference>
<dbReference type="CDD" id="cd03855">
    <property type="entry name" value="M14_ASTE"/>
    <property type="match status" value="1"/>
</dbReference>
<dbReference type="Gene3D" id="3.40.630.10">
    <property type="entry name" value="Zn peptidases"/>
    <property type="match status" value="1"/>
</dbReference>
<dbReference type="HAMAP" id="MF_00767">
    <property type="entry name" value="Arg_catab_AstE"/>
    <property type="match status" value="1"/>
</dbReference>
<dbReference type="InterPro" id="IPR050178">
    <property type="entry name" value="AspA/AstE_fam"/>
</dbReference>
<dbReference type="InterPro" id="IPR055438">
    <property type="entry name" value="AstE_AspA_cat"/>
</dbReference>
<dbReference type="InterPro" id="IPR007036">
    <property type="entry name" value="Aste_AspA_hybrid_dom"/>
</dbReference>
<dbReference type="InterPro" id="IPR016681">
    <property type="entry name" value="SuccinylGlu_desuccinylase"/>
</dbReference>
<dbReference type="NCBIfam" id="NF003706">
    <property type="entry name" value="PRK05324.1"/>
    <property type="match status" value="1"/>
</dbReference>
<dbReference type="PANTHER" id="PTHR15162">
    <property type="entry name" value="ASPARTOACYLASE"/>
    <property type="match status" value="1"/>
</dbReference>
<dbReference type="PANTHER" id="PTHR15162:SF7">
    <property type="entry name" value="SUCCINYLGLUTAMATE DESUCCINYLASE"/>
    <property type="match status" value="1"/>
</dbReference>
<dbReference type="Pfam" id="PF24827">
    <property type="entry name" value="AstE_AspA_cat"/>
    <property type="match status" value="1"/>
</dbReference>
<dbReference type="Pfam" id="PF04952">
    <property type="entry name" value="AstE_AspA_hybrid"/>
    <property type="match status" value="1"/>
</dbReference>
<dbReference type="PIRSF" id="PIRSF017020">
    <property type="entry name" value="AstE"/>
    <property type="match status" value="1"/>
</dbReference>
<dbReference type="SUPFAM" id="SSF53187">
    <property type="entry name" value="Zn-dependent exopeptidases"/>
    <property type="match status" value="1"/>
</dbReference>
<keyword id="KW-0002">3D-structure</keyword>
<keyword id="KW-0056">Arginine metabolism</keyword>
<keyword id="KW-0378">Hydrolase</keyword>
<keyword id="KW-0479">Metal-binding</keyword>
<keyword id="KW-0862">Zinc</keyword>
<organism>
    <name type="scientific">Vibrio parahaemolyticus serotype O3:K6 (strain RIMD 2210633)</name>
    <dbReference type="NCBI Taxonomy" id="223926"/>
    <lineage>
        <taxon>Bacteria</taxon>
        <taxon>Pseudomonadati</taxon>
        <taxon>Pseudomonadota</taxon>
        <taxon>Gammaproteobacteria</taxon>
        <taxon>Vibrionales</taxon>
        <taxon>Vibrionaceae</taxon>
        <taxon>Vibrio</taxon>
    </lineage>
</organism>
<reference key="1">
    <citation type="journal article" date="2003" name="Lancet">
        <title>Genome sequence of Vibrio parahaemolyticus: a pathogenic mechanism distinct from that of V. cholerae.</title>
        <authorList>
            <person name="Makino K."/>
            <person name="Oshima K."/>
            <person name="Kurokawa K."/>
            <person name="Yokoyama K."/>
            <person name="Uda T."/>
            <person name="Tagomori K."/>
            <person name="Iijima Y."/>
            <person name="Najima M."/>
            <person name="Nakano M."/>
            <person name="Yamashita A."/>
            <person name="Kubota Y."/>
            <person name="Kimura S."/>
            <person name="Yasunaga T."/>
            <person name="Honda T."/>
            <person name="Shinagawa H."/>
            <person name="Hattori M."/>
            <person name="Iida T."/>
        </authorList>
    </citation>
    <scope>NUCLEOTIDE SEQUENCE [LARGE SCALE GENOMIC DNA]</scope>
    <source>
        <strain>RIMD 2210633</strain>
    </source>
</reference>
<reference key="2">
    <citation type="submission" date="2005-10" db="PDB data bank">
        <title>X-ray structure of succinylglutamate desuccinalase from Vibrio parahaemolyticus (RIMD 2210633) at the resolution 2.3 A, Northeast structural genomics target Vpr14.</title>
        <authorList>
            <consortium name="Northeast structural genomics consortium (NESG)"/>
        </authorList>
    </citation>
    <scope>X-RAY CRYSTALLOGRAPHY (2.33 ANGSTROMS) IN COMPLEX WITH ZINC IONS</scope>
</reference>
<gene>
    <name evidence="1" type="primary">astE</name>
    <name type="ordered locus">VP1310</name>
</gene>
<accession>Q87Q40</accession>
<protein>
    <recommendedName>
        <fullName evidence="1">Succinylglutamate desuccinylase</fullName>
        <ecNumber evidence="1">3.5.1.96</ecNumber>
    </recommendedName>
</protein>
<evidence type="ECO:0000255" key="1">
    <source>
        <dbReference type="HAMAP-Rule" id="MF_00767"/>
    </source>
</evidence>
<evidence type="ECO:0007829" key="2">
    <source>
        <dbReference type="PDB" id="2BCO"/>
    </source>
</evidence>
<feature type="chain" id="PRO_0000174651" description="Succinylglutamate desuccinylase">
    <location>
        <begin position="1"/>
        <end position="342"/>
    </location>
</feature>
<feature type="active site" evidence="1">
    <location>
        <position position="219"/>
    </location>
</feature>
<feature type="binding site">
    <location>
        <position position="63"/>
    </location>
    <ligand>
        <name>Zn(2+)</name>
        <dbReference type="ChEBI" id="CHEBI:29105"/>
    </ligand>
</feature>
<feature type="binding site">
    <location>
        <position position="66"/>
    </location>
    <ligand>
        <name>Zn(2+)</name>
        <dbReference type="ChEBI" id="CHEBI:29105"/>
    </ligand>
</feature>
<feature type="binding site">
    <location>
        <position position="155"/>
    </location>
    <ligand>
        <name>Zn(2+)</name>
        <dbReference type="ChEBI" id="CHEBI:29105"/>
    </ligand>
</feature>
<feature type="strand" evidence="2">
    <location>
        <begin position="6"/>
        <end position="8"/>
    </location>
</feature>
<feature type="helix" evidence="2">
    <location>
        <begin position="10"/>
        <end position="15"/>
    </location>
</feature>
<feature type="strand" evidence="2">
    <location>
        <begin position="24"/>
        <end position="27"/>
    </location>
</feature>
<feature type="strand" evidence="2">
    <location>
        <begin position="33"/>
        <end position="38"/>
    </location>
</feature>
<feature type="strand" evidence="2">
    <location>
        <begin position="41"/>
        <end position="45"/>
    </location>
</feature>
<feature type="strand" evidence="2">
    <location>
        <begin position="55"/>
        <end position="60"/>
    </location>
</feature>
<feature type="helix" evidence="2">
    <location>
        <begin position="68"/>
        <end position="81"/>
    </location>
</feature>
<feature type="strand" evidence="2">
    <location>
        <begin position="89"/>
        <end position="95"/>
    </location>
</feature>
<feature type="helix" evidence="2">
    <location>
        <begin position="98"/>
        <end position="102"/>
    </location>
</feature>
<feature type="strand" evidence="2">
    <location>
        <begin position="108"/>
        <end position="110"/>
    </location>
</feature>
<feature type="helix" evidence="2">
    <location>
        <begin position="112"/>
        <end position="114"/>
    </location>
</feature>
<feature type="strand" evidence="2">
    <location>
        <begin position="116"/>
        <end position="119"/>
    </location>
</feature>
<feature type="helix" evidence="2">
    <location>
        <begin position="125"/>
        <end position="141"/>
    </location>
</feature>
<feature type="helix" evidence="2">
    <location>
        <begin position="146"/>
        <end position="148"/>
    </location>
</feature>
<feature type="strand" evidence="2">
    <location>
        <begin position="149"/>
        <end position="159"/>
    </location>
</feature>
<feature type="strand" evidence="2">
    <location>
        <begin position="164"/>
        <end position="169"/>
    </location>
</feature>
<feature type="helix" evidence="2">
    <location>
        <begin position="179"/>
        <end position="188"/>
    </location>
</feature>
<feature type="strand" evidence="2">
    <location>
        <begin position="192"/>
        <end position="195"/>
    </location>
</feature>
<feature type="helix" evidence="2">
    <location>
        <begin position="203"/>
        <end position="211"/>
    </location>
</feature>
<feature type="strand" evidence="2">
    <location>
        <begin position="214"/>
        <end position="222"/>
    </location>
</feature>
<feature type="helix" evidence="2">
    <location>
        <begin position="231"/>
        <end position="234"/>
    </location>
</feature>
<feature type="helix" evidence="2">
    <location>
        <begin position="235"/>
        <end position="245"/>
    </location>
</feature>
<feature type="strand" evidence="2">
    <location>
        <begin position="258"/>
        <end position="267"/>
    </location>
</feature>
<feature type="strand" evidence="2">
    <location>
        <begin position="270"/>
        <end position="277"/>
    </location>
</feature>
<feature type="strand" evidence="2">
    <location>
        <begin position="292"/>
        <end position="296"/>
    </location>
</feature>
<feature type="strand" evidence="2">
    <location>
        <begin position="299"/>
        <end position="302"/>
    </location>
</feature>
<feature type="strand" evidence="2">
    <location>
        <begin position="304"/>
        <end position="307"/>
    </location>
</feature>
<feature type="strand" evidence="2">
    <location>
        <begin position="309"/>
        <end position="312"/>
    </location>
</feature>
<feature type="strand" evidence="2">
    <location>
        <begin position="321"/>
        <end position="329"/>
    </location>
</feature>
<feature type="strand" evidence="2">
    <location>
        <begin position="332"/>
        <end position="335"/>
    </location>
</feature>
<feature type="strand" evidence="2">
    <location>
        <begin position="338"/>
        <end position="341"/>
    </location>
</feature>
<proteinExistence type="evidence at protein level"/>
<comment type="function">
    <text evidence="1">Transforms N(2)-succinylglutamate into succinate and glutamate.</text>
</comment>
<comment type="catalytic activity">
    <reaction evidence="1">
        <text>N-succinyl-L-glutamate + H2O = L-glutamate + succinate</text>
        <dbReference type="Rhea" id="RHEA:15169"/>
        <dbReference type="ChEBI" id="CHEBI:15377"/>
        <dbReference type="ChEBI" id="CHEBI:29985"/>
        <dbReference type="ChEBI" id="CHEBI:30031"/>
        <dbReference type="ChEBI" id="CHEBI:58763"/>
        <dbReference type="EC" id="3.5.1.96"/>
    </reaction>
</comment>
<comment type="cofactor">
    <cofactor>
        <name>Zn(2+)</name>
        <dbReference type="ChEBI" id="CHEBI:29105"/>
    </cofactor>
    <text>Binds 1 zinc ion per subunit.</text>
</comment>
<comment type="pathway">
    <text evidence="1">Amino-acid degradation; L-arginine degradation via AST pathway; L-glutamate and succinate from L-arginine: step 5/5.</text>
</comment>
<comment type="similarity">
    <text evidence="1">Belongs to the AspA/AstE family. Succinylglutamate desuccinylase subfamily.</text>
</comment>
<sequence length="342" mass="38837">MTKSLFRQSFLTDTLDVHIDVAPAEQVLSNGVQLKLYQRGVLEVIPENPTQETKNIIISCGIHGDETAPMELVDSIIKDIESGFQKVDARCLFIIAHPESTLAHTRFLEENLNRLFDEKEHEPTKELAIADTLKLLVRDFYQDTEPKTRWHLDLHCAIRGSKHYTFAVSPKTRHPVRSKALVDFLDSAHIEAVLLSNSPSSTFSWYSAENYSAQALTMELGRVARIGENALDRLTAFDLALRNLIAEAQPEHLSKPCIKYRVSRTIVRLHDDFDFMFDDNVENFTSFVHGEVFGHDGDKPLMAKNDNEAIVFPNRHVAIGQRAALMVCEVKTRFEEGELVYD</sequence>